<evidence type="ECO:0000255" key="1">
    <source>
        <dbReference type="HAMAP-Rule" id="MF_00146"/>
    </source>
</evidence>
<gene>
    <name evidence="1" type="primary">dcd</name>
    <name type="ordered locus">NSE_0964</name>
</gene>
<keyword id="KW-0378">Hydrolase</keyword>
<keyword id="KW-0546">Nucleotide metabolism</keyword>
<keyword id="KW-0547">Nucleotide-binding</keyword>
<dbReference type="EC" id="3.5.4.13" evidence="1"/>
<dbReference type="EMBL" id="CP000237">
    <property type="protein sequence ID" value="ABD45725.1"/>
    <property type="molecule type" value="Genomic_DNA"/>
</dbReference>
<dbReference type="RefSeq" id="WP_011452334.1">
    <property type="nucleotide sequence ID" value="NC_007798.1"/>
</dbReference>
<dbReference type="SMR" id="Q2GCG8"/>
<dbReference type="STRING" id="222891.NSE_0964"/>
<dbReference type="KEGG" id="nse:NSE_0964"/>
<dbReference type="eggNOG" id="COG0717">
    <property type="taxonomic scope" value="Bacteria"/>
</dbReference>
<dbReference type="HOGENOM" id="CLU_087476_4_0_5"/>
<dbReference type="OrthoDB" id="9780956at2"/>
<dbReference type="UniPathway" id="UPA00610">
    <property type="reaction ID" value="UER00665"/>
</dbReference>
<dbReference type="Proteomes" id="UP000001942">
    <property type="component" value="Chromosome"/>
</dbReference>
<dbReference type="GO" id="GO:0008829">
    <property type="term" value="F:dCTP deaminase activity"/>
    <property type="evidence" value="ECO:0007669"/>
    <property type="project" value="UniProtKB-UniRule"/>
</dbReference>
<dbReference type="GO" id="GO:0000166">
    <property type="term" value="F:nucleotide binding"/>
    <property type="evidence" value="ECO:0007669"/>
    <property type="project" value="UniProtKB-KW"/>
</dbReference>
<dbReference type="GO" id="GO:0006226">
    <property type="term" value="P:dUMP biosynthetic process"/>
    <property type="evidence" value="ECO:0007669"/>
    <property type="project" value="UniProtKB-UniPathway"/>
</dbReference>
<dbReference type="GO" id="GO:0006229">
    <property type="term" value="P:dUTP biosynthetic process"/>
    <property type="evidence" value="ECO:0007669"/>
    <property type="project" value="UniProtKB-UniRule"/>
</dbReference>
<dbReference type="CDD" id="cd07557">
    <property type="entry name" value="trimeric_dUTPase"/>
    <property type="match status" value="1"/>
</dbReference>
<dbReference type="Gene3D" id="2.70.40.10">
    <property type="match status" value="1"/>
</dbReference>
<dbReference type="HAMAP" id="MF_00146">
    <property type="entry name" value="dCTP_deaminase"/>
    <property type="match status" value="1"/>
</dbReference>
<dbReference type="InterPro" id="IPR011962">
    <property type="entry name" value="dCTP_deaminase"/>
</dbReference>
<dbReference type="InterPro" id="IPR036157">
    <property type="entry name" value="dUTPase-like_sf"/>
</dbReference>
<dbReference type="InterPro" id="IPR033704">
    <property type="entry name" value="dUTPase_trimeric"/>
</dbReference>
<dbReference type="NCBIfam" id="TIGR02274">
    <property type="entry name" value="dCTP_deam"/>
    <property type="match status" value="1"/>
</dbReference>
<dbReference type="PANTHER" id="PTHR42680">
    <property type="entry name" value="DCTP DEAMINASE"/>
    <property type="match status" value="1"/>
</dbReference>
<dbReference type="PANTHER" id="PTHR42680:SF3">
    <property type="entry name" value="DCTP DEAMINASE"/>
    <property type="match status" value="1"/>
</dbReference>
<dbReference type="Pfam" id="PF22769">
    <property type="entry name" value="DCD"/>
    <property type="match status" value="1"/>
</dbReference>
<dbReference type="SUPFAM" id="SSF51283">
    <property type="entry name" value="dUTPase-like"/>
    <property type="match status" value="1"/>
</dbReference>
<organism>
    <name type="scientific">Neorickettsia sennetsu (strain ATCC VR-367 / Miyayama)</name>
    <name type="common">Ehrlichia sennetsu</name>
    <dbReference type="NCBI Taxonomy" id="222891"/>
    <lineage>
        <taxon>Bacteria</taxon>
        <taxon>Pseudomonadati</taxon>
        <taxon>Pseudomonadota</taxon>
        <taxon>Alphaproteobacteria</taxon>
        <taxon>Rickettsiales</taxon>
        <taxon>Anaplasmataceae</taxon>
        <taxon>Neorickettsia</taxon>
    </lineage>
</organism>
<protein>
    <recommendedName>
        <fullName evidence="1">dCTP deaminase</fullName>
        <ecNumber evidence="1">3.5.4.13</ecNumber>
    </recommendedName>
    <alternativeName>
        <fullName evidence="1">Deoxycytidine triphosphate deaminase</fullName>
    </alternativeName>
</protein>
<proteinExistence type="inferred from homology"/>
<accession>Q2GCG8</accession>
<comment type="function">
    <text evidence="1">Catalyzes the deamination of dCTP to dUTP.</text>
</comment>
<comment type="catalytic activity">
    <reaction evidence="1">
        <text>dCTP + H2O + H(+) = dUTP + NH4(+)</text>
        <dbReference type="Rhea" id="RHEA:22680"/>
        <dbReference type="ChEBI" id="CHEBI:15377"/>
        <dbReference type="ChEBI" id="CHEBI:15378"/>
        <dbReference type="ChEBI" id="CHEBI:28938"/>
        <dbReference type="ChEBI" id="CHEBI:61481"/>
        <dbReference type="ChEBI" id="CHEBI:61555"/>
        <dbReference type="EC" id="3.5.4.13"/>
    </reaction>
</comment>
<comment type="pathway">
    <text evidence="1">Pyrimidine metabolism; dUMP biosynthesis; dUMP from dCTP (dUTP route): step 1/2.</text>
</comment>
<comment type="subunit">
    <text evidence="1">Homotrimer.</text>
</comment>
<comment type="similarity">
    <text evidence="1">Belongs to the dCTP deaminase family.</text>
</comment>
<name>DCD_NEOSM</name>
<sequence>MPVMPDQWIKSKALESRMIEPFVSSKISTGVISYGLSSYGYDARVSNKFKIFTNLAVSQVDPKNFDESMLIERTGDFCIIPPNSFALGCTIEYFRVPRGVIVICLGKSTYARCGIIVNVTPLEPEWEGHVTLEFSNTTPLPAKIYSNEGVCQMIFLKGSTNCDVSYKDAKGKYMGQAGITLPIVK</sequence>
<feature type="chain" id="PRO_1000009769" description="dCTP deaminase">
    <location>
        <begin position="1"/>
        <end position="185"/>
    </location>
</feature>
<feature type="active site" description="Proton donor/acceptor" evidence="1">
    <location>
        <position position="133"/>
    </location>
</feature>
<feature type="binding site" evidence="1">
    <location>
        <begin position="107"/>
        <end position="112"/>
    </location>
    <ligand>
        <name>dCTP</name>
        <dbReference type="ChEBI" id="CHEBI:61481"/>
    </ligand>
</feature>
<feature type="binding site" evidence="1">
    <location>
        <begin position="131"/>
        <end position="133"/>
    </location>
    <ligand>
        <name>dCTP</name>
        <dbReference type="ChEBI" id="CHEBI:61481"/>
    </ligand>
</feature>
<feature type="binding site" evidence="1">
    <location>
        <position position="152"/>
    </location>
    <ligand>
        <name>dCTP</name>
        <dbReference type="ChEBI" id="CHEBI:61481"/>
    </ligand>
</feature>
<feature type="binding site" evidence="1">
    <location>
        <position position="166"/>
    </location>
    <ligand>
        <name>dCTP</name>
        <dbReference type="ChEBI" id="CHEBI:61481"/>
    </ligand>
</feature>
<feature type="binding site" evidence="1">
    <location>
        <position position="176"/>
    </location>
    <ligand>
        <name>dCTP</name>
        <dbReference type="ChEBI" id="CHEBI:61481"/>
    </ligand>
</feature>
<reference key="1">
    <citation type="journal article" date="2006" name="PLoS Genet.">
        <title>Comparative genomics of emerging human ehrlichiosis agents.</title>
        <authorList>
            <person name="Dunning Hotopp J.C."/>
            <person name="Lin M."/>
            <person name="Madupu R."/>
            <person name="Crabtree J."/>
            <person name="Angiuoli S.V."/>
            <person name="Eisen J.A."/>
            <person name="Seshadri R."/>
            <person name="Ren Q."/>
            <person name="Wu M."/>
            <person name="Utterback T.R."/>
            <person name="Smith S."/>
            <person name="Lewis M."/>
            <person name="Khouri H."/>
            <person name="Zhang C."/>
            <person name="Niu H."/>
            <person name="Lin Q."/>
            <person name="Ohashi N."/>
            <person name="Zhi N."/>
            <person name="Nelson W.C."/>
            <person name="Brinkac L.M."/>
            <person name="Dodson R.J."/>
            <person name="Rosovitz M.J."/>
            <person name="Sundaram J.P."/>
            <person name="Daugherty S.C."/>
            <person name="Davidsen T."/>
            <person name="Durkin A.S."/>
            <person name="Gwinn M.L."/>
            <person name="Haft D.H."/>
            <person name="Selengut J.D."/>
            <person name="Sullivan S.A."/>
            <person name="Zafar N."/>
            <person name="Zhou L."/>
            <person name="Benahmed F."/>
            <person name="Forberger H."/>
            <person name="Halpin R."/>
            <person name="Mulligan S."/>
            <person name="Robinson J."/>
            <person name="White O."/>
            <person name="Rikihisa Y."/>
            <person name="Tettelin H."/>
        </authorList>
    </citation>
    <scope>NUCLEOTIDE SEQUENCE [LARGE SCALE GENOMIC DNA]</scope>
    <source>
        <strain>ATCC VR-367 / Miyayama</strain>
    </source>
</reference>